<accession>Q54BK0</accession>
<sequence length="1506" mass="168882">MEESQNIPPKTQTLNNSENSINNINNNNLTTTTTTTAVGNTNYKNNNRYNNNRYNRNNFNNYNNNNNNNNNNNNMVTSTTSPPTTTTTTTSTTTTATPSSNSNNRRKNYHNNNYNNNNNNNQLSEDTDEVILYTPADISASLKSESAKQQQQQQQQSLPTQEPTQTLNWQQELYKLNPKSKAFVPKPQGSVPFNNTNNNNNNNNNNNNNVPQSPIKDNNRPQRERRERKPKENNTQQPQPQQPQQPQQPQPQPQQQQQSQQQQTVKENNRKKENKLQSKKDIITNNDNIEPIKSKEDISLANKFAKNRAKENLAKTNSINNSNTANSNKIKGKTKFIFNENDEKNSEYTPLAIQMITKIQANIYECMVCFENVGKNAVIWSCSQCFTMFHSSCIKQWSSKSVTTEGKWKCPGCRYNHEVKPEHFQPACFCGKVKDPQYNPYHLAHSCGEVCGKLRAKSNCPHSCTMLCHPGPCLNCSSLGDIKDCYCGKTKYRLLCGEVDKGKVCEGKCEKLLSCGNHRCQQQCHSGSCSPCEVVETQKCYCGKHIDKTKPCGSGSIDTSQSDDDPRFFSCAEKCDRTLDCGNHKCQRTCHKGDCEPCSLVPDRVDRCNCKQTTLEELGVVRTSCLDPIPVCKKVCSTLLACKQHSCTDRCHTGPCGSCKVKVRSICRCGKTTENRQCGVIQQNMSSTSAAAFTCGNVCKILRSCKRHECGVKCCPSTSSSDEAGNHVCTLVCGKQLKCGVHKCQQLCHSGKCYNCYINSYDDLACPCGKTVIQPPVPCGTKPPMCNHPCTIKRECGHSNEVWEHKCHSGPCPPCTYLVDKMCAGGHQVQKSVKCSTIDASCGRICGKVLSCLSHTCPRICHSGPCLINNNNVNINKQQPLLPANLIASKNNYQLQQQSKLPTTTTTTTTTTSTTSTTSPKIIEKDEELIEDDNNNNNNNNNNNNNNNNNNNNNNNNNNNNNNNNNNNNNNNNNNNNNNNEKAEITNECNHDHDHEHEHSDDENSEEEVDLNECNHNHECNEEEERIKKEEKEDDEDEDELFDSLMGNLTCGYLCGIPLKSCEHTCHQACHPGEPCPTNISCKQKVRIYCKCKRRSVETLCCGKDDTRQLECDEVCEKEEREKQLKEAFYGSHTLDNNPNNPNNPNNPNNNTTTTTTTTTTTTSSPTNFTVLDPTSIDYQPNKLQIEALQLIAKASPKLIKKIEAIYEDFINSNLLKQTIKYTDSIQLFLLVQMAKFYQMKYREKKPLNYIEFFKKTSYQIPSPRLSEMVGINGSSLSSGTISNSLSFSINNGQSYASISLSPSEMVAQAQAQAELENQCPALLFKNLDPSIKTDHLTNLLQEFEGRYKLMWVDDSNCLAIFGDSISFSMASQIKTMFTYEIYQDDPSLIDITFGNSVLSTPTSSSGSNSGVSSPLSYLSPLKKSQDTQFFRVSQQMNKFSFLDTINQNQNQNNNNNNNNNNNNNSNINIKPTIPLYSTSTANANRMLRRSNENTGENVADDWENL</sequence>
<keyword id="KW-0238">DNA-binding</keyword>
<keyword id="KW-0479">Metal-binding</keyword>
<keyword id="KW-0539">Nucleus</keyword>
<keyword id="KW-1185">Reference proteome</keyword>
<keyword id="KW-0677">Repeat</keyword>
<keyword id="KW-0804">Transcription</keyword>
<keyword id="KW-0805">Transcription regulation</keyword>
<keyword id="KW-0862">Zinc</keyword>
<keyword id="KW-0863">Zinc-finger</keyword>
<reference key="1">
    <citation type="journal article" date="2005" name="Nature">
        <title>The genome of the social amoeba Dictyostelium discoideum.</title>
        <authorList>
            <person name="Eichinger L."/>
            <person name="Pachebat J.A."/>
            <person name="Gloeckner G."/>
            <person name="Rajandream M.A."/>
            <person name="Sucgang R."/>
            <person name="Berriman M."/>
            <person name="Song J."/>
            <person name="Olsen R."/>
            <person name="Szafranski K."/>
            <person name="Xu Q."/>
            <person name="Tunggal B."/>
            <person name="Kummerfeld S."/>
            <person name="Madera M."/>
            <person name="Konfortov B.A."/>
            <person name="Rivero F."/>
            <person name="Bankier A.T."/>
            <person name="Lehmann R."/>
            <person name="Hamlin N."/>
            <person name="Davies R."/>
            <person name="Gaudet P."/>
            <person name="Fey P."/>
            <person name="Pilcher K."/>
            <person name="Chen G."/>
            <person name="Saunders D."/>
            <person name="Sodergren E.J."/>
            <person name="Davis P."/>
            <person name="Kerhornou A."/>
            <person name="Nie X."/>
            <person name="Hall N."/>
            <person name="Anjard C."/>
            <person name="Hemphill L."/>
            <person name="Bason N."/>
            <person name="Farbrother P."/>
            <person name="Desany B."/>
            <person name="Just E."/>
            <person name="Morio T."/>
            <person name="Rost R."/>
            <person name="Churcher C.M."/>
            <person name="Cooper J."/>
            <person name="Haydock S."/>
            <person name="van Driessche N."/>
            <person name="Cronin A."/>
            <person name="Goodhead I."/>
            <person name="Muzny D.M."/>
            <person name="Mourier T."/>
            <person name="Pain A."/>
            <person name="Lu M."/>
            <person name="Harper D."/>
            <person name="Lindsay R."/>
            <person name="Hauser H."/>
            <person name="James K.D."/>
            <person name="Quiles M."/>
            <person name="Madan Babu M."/>
            <person name="Saito T."/>
            <person name="Buchrieser C."/>
            <person name="Wardroper A."/>
            <person name="Felder M."/>
            <person name="Thangavelu M."/>
            <person name="Johnson D."/>
            <person name="Knights A."/>
            <person name="Loulseged H."/>
            <person name="Mungall K.L."/>
            <person name="Oliver K."/>
            <person name="Price C."/>
            <person name="Quail M.A."/>
            <person name="Urushihara H."/>
            <person name="Hernandez J."/>
            <person name="Rabbinowitsch E."/>
            <person name="Steffen D."/>
            <person name="Sanders M."/>
            <person name="Ma J."/>
            <person name="Kohara Y."/>
            <person name="Sharp S."/>
            <person name="Simmonds M.N."/>
            <person name="Spiegler S."/>
            <person name="Tivey A."/>
            <person name="Sugano S."/>
            <person name="White B."/>
            <person name="Walker D."/>
            <person name="Woodward J.R."/>
            <person name="Winckler T."/>
            <person name="Tanaka Y."/>
            <person name="Shaulsky G."/>
            <person name="Schleicher M."/>
            <person name="Weinstock G.M."/>
            <person name="Rosenthal A."/>
            <person name="Cox E.C."/>
            <person name="Chisholm R.L."/>
            <person name="Gibbs R.A."/>
            <person name="Loomis W.F."/>
            <person name="Platzer M."/>
            <person name="Kay R.R."/>
            <person name="Williams J.G."/>
            <person name="Dear P.H."/>
            <person name="Noegel A.A."/>
            <person name="Barrell B.G."/>
            <person name="Kuspa A."/>
        </authorList>
    </citation>
    <scope>NUCLEOTIDE SEQUENCE [LARGE SCALE GENOMIC DNA]</scope>
    <source>
        <strain>AX4</strain>
    </source>
</reference>
<organism>
    <name type="scientific">Dictyostelium discoideum</name>
    <name type="common">Social amoeba</name>
    <dbReference type="NCBI Taxonomy" id="44689"/>
    <lineage>
        <taxon>Eukaryota</taxon>
        <taxon>Amoebozoa</taxon>
        <taxon>Evosea</taxon>
        <taxon>Eumycetozoa</taxon>
        <taxon>Dictyostelia</taxon>
        <taxon>Dictyosteliales</taxon>
        <taxon>Dictyosteliaceae</taxon>
        <taxon>Dictyostelium</taxon>
    </lineage>
</organism>
<comment type="function">
    <text evidence="1">May play a role in transcription regulation.</text>
</comment>
<comment type="subcellular location">
    <subcellularLocation>
        <location evidence="1">Nucleus</location>
    </subcellularLocation>
</comment>
<comment type="similarity">
    <text evidence="4">Belongs to the NFX1 family.</text>
</comment>
<name>NFX1_DICDI</name>
<dbReference type="EMBL" id="AAFI02000218">
    <property type="protein sequence ID" value="EAL60607.1"/>
    <property type="molecule type" value="Genomic_DNA"/>
</dbReference>
<dbReference type="RefSeq" id="XP_629029.1">
    <property type="nucleotide sequence ID" value="XM_629027.1"/>
</dbReference>
<dbReference type="SMR" id="Q54BK0"/>
<dbReference type="FunCoup" id="Q54BK0">
    <property type="interactions" value="425"/>
</dbReference>
<dbReference type="STRING" id="44689.Q54BK0"/>
<dbReference type="GlyGen" id="Q54BK0">
    <property type="glycosylation" value="1 site"/>
</dbReference>
<dbReference type="PaxDb" id="44689-DDB0220630"/>
<dbReference type="EnsemblProtists" id="EAL60607">
    <property type="protein sequence ID" value="EAL60607"/>
    <property type="gene ID" value="DDB_G0293590"/>
</dbReference>
<dbReference type="GeneID" id="8629315"/>
<dbReference type="KEGG" id="ddi:DDB_G0293590"/>
<dbReference type="dictyBase" id="DDB_G0293590"/>
<dbReference type="VEuPathDB" id="AmoebaDB:DDB_G0293590"/>
<dbReference type="eggNOG" id="KOG1952">
    <property type="taxonomic scope" value="Eukaryota"/>
</dbReference>
<dbReference type="HOGENOM" id="CLU_248448_0_0_1"/>
<dbReference type="InParanoid" id="Q54BK0"/>
<dbReference type="OMA" id="ETQKCYC"/>
<dbReference type="PRO" id="PR:Q54BK0"/>
<dbReference type="Proteomes" id="UP000002195">
    <property type="component" value="Chromosome 6"/>
</dbReference>
<dbReference type="GO" id="GO:0005634">
    <property type="term" value="C:nucleus"/>
    <property type="evidence" value="ECO:0000318"/>
    <property type="project" value="GO_Central"/>
</dbReference>
<dbReference type="GO" id="GO:0000981">
    <property type="term" value="F:DNA-binding transcription factor activity, RNA polymerase II-specific"/>
    <property type="evidence" value="ECO:0000318"/>
    <property type="project" value="GO_Central"/>
</dbReference>
<dbReference type="GO" id="GO:0000977">
    <property type="term" value="F:RNA polymerase II transcription regulatory region sequence-specific DNA binding"/>
    <property type="evidence" value="ECO:0000318"/>
    <property type="project" value="GO_Central"/>
</dbReference>
<dbReference type="GO" id="GO:0008270">
    <property type="term" value="F:zinc ion binding"/>
    <property type="evidence" value="ECO:0007669"/>
    <property type="project" value="UniProtKB-KW"/>
</dbReference>
<dbReference type="GO" id="GO:0000122">
    <property type="term" value="P:negative regulation of transcription by RNA polymerase II"/>
    <property type="evidence" value="ECO:0000318"/>
    <property type="project" value="GO_Central"/>
</dbReference>
<dbReference type="CDD" id="cd06008">
    <property type="entry name" value="NF-X1-zinc-finger"/>
    <property type="match status" value="7"/>
</dbReference>
<dbReference type="CDD" id="cd16492">
    <property type="entry name" value="RING-CH-C4HC3_NFX1-like"/>
    <property type="match status" value="1"/>
</dbReference>
<dbReference type="InterPro" id="IPR034078">
    <property type="entry name" value="NFX1_fam"/>
</dbReference>
<dbReference type="InterPro" id="IPR000967">
    <property type="entry name" value="Znf_NFX1"/>
</dbReference>
<dbReference type="InterPro" id="IPR019787">
    <property type="entry name" value="Znf_PHD-finger"/>
</dbReference>
<dbReference type="InterPro" id="IPR001841">
    <property type="entry name" value="Znf_RING"/>
</dbReference>
<dbReference type="PANTHER" id="PTHR12360">
    <property type="entry name" value="NUCLEAR TRANSCRIPTION FACTOR, X-BOX BINDING 1 NFX1"/>
    <property type="match status" value="1"/>
</dbReference>
<dbReference type="PANTHER" id="PTHR12360:SF12">
    <property type="entry name" value="TRANSCRIPTIONAL REPRESSOR NF-X1"/>
    <property type="match status" value="1"/>
</dbReference>
<dbReference type="Pfam" id="PF01422">
    <property type="entry name" value="zf-NF-X1"/>
    <property type="match status" value="8"/>
</dbReference>
<dbReference type="SMART" id="SM00438">
    <property type="entry name" value="ZnF_NFX"/>
    <property type="match status" value="8"/>
</dbReference>
<dbReference type="SUPFAM" id="SSF57850">
    <property type="entry name" value="RING/U-box"/>
    <property type="match status" value="1"/>
</dbReference>
<dbReference type="PROSITE" id="PS50089">
    <property type="entry name" value="ZF_RING_2"/>
    <property type="match status" value="1"/>
</dbReference>
<gene>
    <name type="primary">nfx1</name>
    <name type="ORF">DDB_G0293590</name>
</gene>
<proteinExistence type="inferred from homology"/>
<evidence type="ECO:0000250" key="1"/>
<evidence type="ECO:0000255" key="2">
    <source>
        <dbReference type="PROSITE-ProRule" id="PRU00175"/>
    </source>
</evidence>
<evidence type="ECO:0000256" key="3">
    <source>
        <dbReference type="SAM" id="MobiDB-lite"/>
    </source>
</evidence>
<evidence type="ECO:0000305" key="4"/>
<protein>
    <recommendedName>
        <fullName>Transcriptional repressor NF-X1 homolog</fullName>
    </recommendedName>
</protein>
<feature type="chain" id="PRO_0000334616" description="Transcriptional repressor NF-X1 homolog">
    <location>
        <begin position="1"/>
        <end position="1506"/>
    </location>
</feature>
<feature type="zinc finger region" description="PHD-type">
    <location>
        <begin position="363"/>
        <end position="416"/>
    </location>
</feature>
<feature type="zinc finger region" description="RING-type; degenerate" evidence="2">
    <location>
        <begin position="366"/>
        <end position="414"/>
    </location>
</feature>
<feature type="zinc finger region" description="NF-X1-type 1">
    <location>
        <begin position="460"/>
        <end position="478"/>
    </location>
</feature>
<feature type="zinc finger region" description="NF-X1-type 2">
    <location>
        <begin position="515"/>
        <end position="534"/>
    </location>
</feature>
<feature type="zinc finger region" description="NF-X1-type 3">
    <location>
        <begin position="581"/>
        <end position="600"/>
    </location>
</feature>
<feature type="zinc finger region" description="NF-X1-type 4">
    <location>
        <begin position="642"/>
        <end position="661"/>
    </location>
</feature>
<feature type="zinc finger region" description="NF-X1-type 5">
    <location>
        <begin position="739"/>
        <end position="758"/>
    </location>
</feature>
<feature type="zinc finger region" description="NF-X1-type 6">
    <location>
        <begin position="796"/>
        <end position="817"/>
    </location>
</feature>
<feature type="zinc finger region" description="NF-X1-type 7">
    <location>
        <begin position="852"/>
        <end position="868"/>
    </location>
</feature>
<feature type="zinc finger region" description="NF-X1-type 8">
    <location>
        <begin position="1062"/>
        <end position="1084"/>
    </location>
</feature>
<feature type="region of interest" description="Disordered" evidence="3">
    <location>
        <begin position="1"/>
        <end position="123"/>
    </location>
</feature>
<feature type="region of interest" description="Disordered" evidence="3">
    <location>
        <begin position="142"/>
        <end position="164"/>
    </location>
</feature>
<feature type="region of interest" description="Disordered" evidence="3">
    <location>
        <begin position="181"/>
        <end position="282"/>
    </location>
</feature>
<feature type="region of interest" description="Disordered" evidence="3">
    <location>
        <begin position="897"/>
        <end position="1012"/>
    </location>
</feature>
<feature type="region of interest" description="Disordered" evidence="3">
    <location>
        <begin position="1021"/>
        <end position="1040"/>
    </location>
</feature>
<feature type="region of interest" description="Disordered" evidence="3">
    <location>
        <begin position="1132"/>
        <end position="1167"/>
    </location>
</feature>
<feature type="region of interest" description="Disordered" evidence="3">
    <location>
        <begin position="1447"/>
        <end position="1473"/>
    </location>
</feature>
<feature type="compositionally biased region" description="Polar residues" evidence="3">
    <location>
        <begin position="1"/>
        <end position="12"/>
    </location>
</feature>
<feature type="compositionally biased region" description="Low complexity" evidence="3">
    <location>
        <begin position="13"/>
        <end position="103"/>
    </location>
</feature>
<feature type="compositionally biased region" description="Low complexity" evidence="3">
    <location>
        <begin position="110"/>
        <end position="121"/>
    </location>
</feature>
<feature type="compositionally biased region" description="Low complexity" evidence="3">
    <location>
        <begin position="194"/>
        <end position="209"/>
    </location>
</feature>
<feature type="compositionally biased region" description="Basic and acidic residues" evidence="3">
    <location>
        <begin position="217"/>
        <end position="232"/>
    </location>
</feature>
<feature type="compositionally biased region" description="Pro residues" evidence="3">
    <location>
        <begin position="240"/>
        <end position="252"/>
    </location>
</feature>
<feature type="compositionally biased region" description="Low complexity" evidence="3">
    <location>
        <begin position="253"/>
        <end position="263"/>
    </location>
</feature>
<feature type="compositionally biased region" description="Basic and acidic residues" evidence="3">
    <location>
        <begin position="267"/>
        <end position="282"/>
    </location>
</feature>
<feature type="compositionally biased region" description="Low complexity" evidence="3">
    <location>
        <begin position="903"/>
        <end position="921"/>
    </location>
</feature>
<feature type="compositionally biased region" description="Acidic residues" evidence="3">
    <location>
        <begin position="925"/>
        <end position="934"/>
    </location>
</feature>
<feature type="compositionally biased region" description="Low complexity" evidence="3">
    <location>
        <begin position="935"/>
        <end position="980"/>
    </location>
</feature>
<feature type="compositionally biased region" description="Basic and acidic residues" evidence="3">
    <location>
        <begin position="981"/>
        <end position="1002"/>
    </location>
</feature>
<feature type="compositionally biased region" description="Basic and acidic residues" evidence="3">
    <location>
        <begin position="1021"/>
        <end position="1031"/>
    </location>
</feature>
<feature type="compositionally biased region" description="Low complexity" evidence="3">
    <location>
        <begin position="1137"/>
        <end position="1167"/>
    </location>
</feature>
<feature type="compositionally biased region" description="Low complexity" evidence="3">
    <location>
        <begin position="1447"/>
        <end position="1470"/>
    </location>
</feature>